<feature type="chain" id="PRO_1000076621" description="dCTP deaminase">
    <location>
        <begin position="1"/>
        <end position="194"/>
    </location>
</feature>
<feature type="region of interest" description="Disordered" evidence="2">
    <location>
        <begin position="169"/>
        <end position="194"/>
    </location>
</feature>
<feature type="compositionally biased region" description="Basic and acidic residues" evidence="2">
    <location>
        <begin position="170"/>
        <end position="181"/>
    </location>
</feature>
<feature type="compositionally biased region" description="Polar residues" evidence="2">
    <location>
        <begin position="182"/>
        <end position="194"/>
    </location>
</feature>
<feature type="active site" description="Proton donor/acceptor" evidence="1">
    <location>
        <position position="138"/>
    </location>
</feature>
<feature type="binding site" evidence="1">
    <location>
        <begin position="110"/>
        <end position="115"/>
    </location>
    <ligand>
        <name>dCTP</name>
        <dbReference type="ChEBI" id="CHEBI:61481"/>
    </ligand>
</feature>
<feature type="binding site" evidence="1">
    <location>
        <position position="128"/>
    </location>
    <ligand>
        <name>dCTP</name>
        <dbReference type="ChEBI" id="CHEBI:61481"/>
    </ligand>
</feature>
<feature type="binding site" evidence="1">
    <location>
        <begin position="136"/>
        <end position="138"/>
    </location>
    <ligand>
        <name>dCTP</name>
        <dbReference type="ChEBI" id="CHEBI:61481"/>
    </ligand>
</feature>
<feature type="binding site" evidence="1">
    <location>
        <position position="171"/>
    </location>
    <ligand>
        <name>dCTP</name>
        <dbReference type="ChEBI" id="CHEBI:61481"/>
    </ligand>
</feature>
<feature type="binding site" evidence="1">
    <location>
        <position position="178"/>
    </location>
    <ligand>
        <name>dCTP</name>
        <dbReference type="ChEBI" id="CHEBI:61481"/>
    </ligand>
</feature>
<feature type="binding site" evidence="1">
    <location>
        <position position="182"/>
    </location>
    <ligand>
        <name>dCTP</name>
        <dbReference type="ChEBI" id="CHEBI:61481"/>
    </ligand>
</feature>
<organism>
    <name type="scientific">Marinomonas sp. (strain MWYL1)</name>
    <dbReference type="NCBI Taxonomy" id="400668"/>
    <lineage>
        <taxon>Bacteria</taxon>
        <taxon>Pseudomonadati</taxon>
        <taxon>Pseudomonadota</taxon>
        <taxon>Gammaproteobacteria</taxon>
        <taxon>Oceanospirillales</taxon>
        <taxon>Oceanospirillaceae</taxon>
        <taxon>Marinomonas</taxon>
    </lineage>
</organism>
<sequence>MRLCDRDIIKALDEGSIVIEPRPDNSVISGVSVDLRLGNSFRVFQGHPAPYLDLSSSKADLSKVIESVMSEEILVDDGKPFFIHPGELVLGVTKESVTLPDNLVGWLDGRSSLARLGLMVHVTAHRIDPGWSGGIVLEFLNGGKLPIALSPGMTIGAINFETMSGSADRPYNKRDNAKYKDQTSAVGSRISGEN</sequence>
<comment type="function">
    <text evidence="1">Catalyzes the deamination of dCTP to dUTP.</text>
</comment>
<comment type="catalytic activity">
    <reaction evidence="1">
        <text>dCTP + H2O + H(+) = dUTP + NH4(+)</text>
        <dbReference type="Rhea" id="RHEA:22680"/>
        <dbReference type="ChEBI" id="CHEBI:15377"/>
        <dbReference type="ChEBI" id="CHEBI:15378"/>
        <dbReference type="ChEBI" id="CHEBI:28938"/>
        <dbReference type="ChEBI" id="CHEBI:61481"/>
        <dbReference type="ChEBI" id="CHEBI:61555"/>
        <dbReference type="EC" id="3.5.4.13"/>
    </reaction>
</comment>
<comment type="pathway">
    <text evidence="1">Pyrimidine metabolism; dUMP biosynthesis; dUMP from dCTP (dUTP route): step 1/2.</text>
</comment>
<comment type="subunit">
    <text evidence="1">Homotrimer.</text>
</comment>
<comment type="similarity">
    <text evidence="1">Belongs to the dCTP deaminase family.</text>
</comment>
<evidence type="ECO:0000255" key="1">
    <source>
        <dbReference type="HAMAP-Rule" id="MF_00146"/>
    </source>
</evidence>
<evidence type="ECO:0000256" key="2">
    <source>
        <dbReference type="SAM" id="MobiDB-lite"/>
    </source>
</evidence>
<name>DCD_MARMS</name>
<gene>
    <name evidence="1" type="primary">dcd</name>
    <name type="ordered locus">Mmwyl1_1548</name>
</gene>
<reference key="1">
    <citation type="submission" date="2007-06" db="EMBL/GenBank/DDBJ databases">
        <title>Complete sequence of Marinomonas sp. MWYL1.</title>
        <authorList>
            <consortium name="US DOE Joint Genome Institute"/>
            <person name="Copeland A."/>
            <person name="Lucas S."/>
            <person name="Lapidus A."/>
            <person name="Barry K."/>
            <person name="Glavina del Rio T."/>
            <person name="Dalin E."/>
            <person name="Tice H."/>
            <person name="Pitluck S."/>
            <person name="Kiss H."/>
            <person name="Brettin T."/>
            <person name="Bruce D."/>
            <person name="Detter J.C."/>
            <person name="Han C."/>
            <person name="Schmutz J."/>
            <person name="Larimer F."/>
            <person name="Land M."/>
            <person name="Hauser L."/>
            <person name="Kyrpides N."/>
            <person name="Kim E."/>
            <person name="Johnston A.W.B."/>
            <person name="Todd J.D."/>
            <person name="Rogers R."/>
            <person name="Wexler M."/>
            <person name="Bond P.L."/>
            <person name="Li Y."/>
            <person name="Richardson P."/>
        </authorList>
    </citation>
    <scope>NUCLEOTIDE SEQUENCE [LARGE SCALE GENOMIC DNA]</scope>
    <source>
        <strain>MWYL1</strain>
    </source>
</reference>
<keyword id="KW-0378">Hydrolase</keyword>
<keyword id="KW-0546">Nucleotide metabolism</keyword>
<keyword id="KW-0547">Nucleotide-binding</keyword>
<accession>A6VVJ7</accession>
<dbReference type="EC" id="3.5.4.13" evidence="1"/>
<dbReference type="EMBL" id="CP000749">
    <property type="protein sequence ID" value="ABR70476.1"/>
    <property type="molecule type" value="Genomic_DNA"/>
</dbReference>
<dbReference type="SMR" id="A6VVJ7"/>
<dbReference type="STRING" id="400668.Mmwyl1_1548"/>
<dbReference type="KEGG" id="mmw:Mmwyl1_1548"/>
<dbReference type="eggNOG" id="COG0717">
    <property type="taxonomic scope" value="Bacteria"/>
</dbReference>
<dbReference type="HOGENOM" id="CLU_087476_2_0_6"/>
<dbReference type="OrthoDB" id="9780956at2"/>
<dbReference type="UniPathway" id="UPA00610">
    <property type="reaction ID" value="UER00665"/>
</dbReference>
<dbReference type="GO" id="GO:0008829">
    <property type="term" value="F:dCTP deaminase activity"/>
    <property type="evidence" value="ECO:0007669"/>
    <property type="project" value="UniProtKB-UniRule"/>
</dbReference>
<dbReference type="GO" id="GO:0000166">
    <property type="term" value="F:nucleotide binding"/>
    <property type="evidence" value="ECO:0007669"/>
    <property type="project" value="UniProtKB-KW"/>
</dbReference>
<dbReference type="GO" id="GO:0006226">
    <property type="term" value="P:dUMP biosynthetic process"/>
    <property type="evidence" value="ECO:0007669"/>
    <property type="project" value="UniProtKB-UniPathway"/>
</dbReference>
<dbReference type="GO" id="GO:0006229">
    <property type="term" value="P:dUTP biosynthetic process"/>
    <property type="evidence" value="ECO:0007669"/>
    <property type="project" value="UniProtKB-UniRule"/>
</dbReference>
<dbReference type="GO" id="GO:0015949">
    <property type="term" value="P:nucleobase-containing small molecule interconversion"/>
    <property type="evidence" value="ECO:0007669"/>
    <property type="project" value="TreeGrafter"/>
</dbReference>
<dbReference type="CDD" id="cd07557">
    <property type="entry name" value="trimeric_dUTPase"/>
    <property type="match status" value="1"/>
</dbReference>
<dbReference type="Gene3D" id="2.70.40.10">
    <property type="match status" value="1"/>
</dbReference>
<dbReference type="HAMAP" id="MF_00146">
    <property type="entry name" value="dCTP_deaminase"/>
    <property type="match status" value="1"/>
</dbReference>
<dbReference type="InterPro" id="IPR011962">
    <property type="entry name" value="dCTP_deaminase"/>
</dbReference>
<dbReference type="InterPro" id="IPR036157">
    <property type="entry name" value="dUTPase-like_sf"/>
</dbReference>
<dbReference type="InterPro" id="IPR033704">
    <property type="entry name" value="dUTPase_trimeric"/>
</dbReference>
<dbReference type="NCBIfam" id="TIGR02274">
    <property type="entry name" value="dCTP_deam"/>
    <property type="match status" value="1"/>
</dbReference>
<dbReference type="PANTHER" id="PTHR42680">
    <property type="entry name" value="DCTP DEAMINASE"/>
    <property type="match status" value="1"/>
</dbReference>
<dbReference type="PANTHER" id="PTHR42680:SF3">
    <property type="entry name" value="DCTP DEAMINASE"/>
    <property type="match status" value="1"/>
</dbReference>
<dbReference type="Pfam" id="PF22769">
    <property type="entry name" value="DCD"/>
    <property type="match status" value="1"/>
</dbReference>
<dbReference type="SUPFAM" id="SSF51283">
    <property type="entry name" value="dUTPase-like"/>
    <property type="match status" value="1"/>
</dbReference>
<proteinExistence type="inferred from homology"/>
<protein>
    <recommendedName>
        <fullName evidence="1">dCTP deaminase</fullName>
        <ecNumber evidence="1">3.5.4.13</ecNumber>
    </recommendedName>
    <alternativeName>
        <fullName evidence="1">Deoxycytidine triphosphate deaminase</fullName>
    </alternativeName>
</protein>